<evidence type="ECO:0000255" key="1">
    <source>
        <dbReference type="HAMAP-Rule" id="MF_00508"/>
    </source>
</evidence>
<evidence type="ECO:0000305" key="2"/>
<accession>Q1LTD9</accession>
<reference key="1">
    <citation type="journal article" date="2006" name="PLoS Biol.">
        <title>Metabolic complementarity and genomics of the dual bacterial symbiosis of sharpshooters.</title>
        <authorList>
            <person name="Wu D."/>
            <person name="Daugherty S.C."/>
            <person name="Van Aken S.E."/>
            <person name="Pai G.H."/>
            <person name="Watkins K.L."/>
            <person name="Khouri H."/>
            <person name="Tallon L.J."/>
            <person name="Zaborsky J.M."/>
            <person name="Dunbar H.E."/>
            <person name="Tran P.L."/>
            <person name="Moran N.A."/>
            <person name="Eisen J.A."/>
        </authorList>
    </citation>
    <scope>NUCLEOTIDE SEQUENCE [LARGE SCALE GENOMIC DNA]</scope>
</reference>
<keyword id="KW-1185">Reference proteome</keyword>
<keyword id="KW-0687">Ribonucleoprotein</keyword>
<keyword id="KW-0689">Ribosomal protein</keyword>
<gene>
    <name evidence="1" type="primary">rpsJ</name>
    <name type="ordered locus">BCI_0327</name>
</gene>
<protein>
    <recommendedName>
        <fullName evidence="1">Small ribosomal subunit protein uS10</fullName>
    </recommendedName>
    <alternativeName>
        <fullName evidence="2">30S ribosomal protein S10</fullName>
    </alternativeName>
</protein>
<proteinExistence type="inferred from homology"/>
<feature type="chain" id="PRO_0000258537" description="Small ribosomal subunit protein uS10">
    <location>
        <begin position="1"/>
        <end position="103"/>
    </location>
</feature>
<name>RS10_BAUCH</name>
<organism>
    <name type="scientific">Baumannia cicadellinicola subsp. Homalodisca coagulata</name>
    <dbReference type="NCBI Taxonomy" id="374463"/>
    <lineage>
        <taxon>Bacteria</taxon>
        <taxon>Pseudomonadati</taxon>
        <taxon>Pseudomonadota</taxon>
        <taxon>Gammaproteobacteria</taxon>
        <taxon>Candidatus Palibaumannia</taxon>
    </lineage>
</organism>
<comment type="function">
    <text evidence="1">Involved in the binding of tRNA to the ribosomes.</text>
</comment>
<comment type="subunit">
    <text evidence="1">Part of the 30S ribosomal subunit.</text>
</comment>
<comment type="similarity">
    <text evidence="1">Belongs to the universal ribosomal protein uS10 family.</text>
</comment>
<dbReference type="EMBL" id="CP000238">
    <property type="protein sequence ID" value="ABF14346.1"/>
    <property type="molecule type" value="Genomic_DNA"/>
</dbReference>
<dbReference type="RefSeq" id="WP_011520508.1">
    <property type="nucleotide sequence ID" value="NC_007984.1"/>
</dbReference>
<dbReference type="SMR" id="Q1LTD9"/>
<dbReference type="STRING" id="374463.BCI_0327"/>
<dbReference type="KEGG" id="bci:BCI_0327"/>
<dbReference type="HOGENOM" id="CLU_122625_1_3_6"/>
<dbReference type="OrthoDB" id="9804464at2"/>
<dbReference type="Proteomes" id="UP000002427">
    <property type="component" value="Chromosome"/>
</dbReference>
<dbReference type="GO" id="GO:1990904">
    <property type="term" value="C:ribonucleoprotein complex"/>
    <property type="evidence" value="ECO:0007669"/>
    <property type="project" value="UniProtKB-KW"/>
</dbReference>
<dbReference type="GO" id="GO:0005840">
    <property type="term" value="C:ribosome"/>
    <property type="evidence" value="ECO:0007669"/>
    <property type="project" value="UniProtKB-KW"/>
</dbReference>
<dbReference type="GO" id="GO:0003735">
    <property type="term" value="F:structural constituent of ribosome"/>
    <property type="evidence" value="ECO:0007669"/>
    <property type="project" value="InterPro"/>
</dbReference>
<dbReference type="GO" id="GO:0000049">
    <property type="term" value="F:tRNA binding"/>
    <property type="evidence" value="ECO:0007669"/>
    <property type="project" value="UniProtKB-UniRule"/>
</dbReference>
<dbReference type="GO" id="GO:0006412">
    <property type="term" value="P:translation"/>
    <property type="evidence" value="ECO:0007669"/>
    <property type="project" value="UniProtKB-UniRule"/>
</dbReference>
<dbReference type="FunFam" id="3.30.70.600:FF:000001">
    <property type="entry name" value="30S ribosomal protein S10"/>
    <property type="match status" value="1"/>
</dbReference>
<dbReference type="Gene3D" id="3.30.70.600">
    <property type="entry name" value="Ribosomal protein S10 domain"/>
    <property type="match status" value="1"/>
</dbReference>
<dbReference type="HAMAP" id="MF_00508">
    <property type="entry name" value="Ribosomal_uS10"/>
    <property type="match status" value="1"/>
</dbReference>
<dbReference type="InterPro" id="IPR001848">
    <property type="entry name" value="Ribosomal_uS10"/>
</dbReference>
<dbReference type="InterPro" id="IPR018268">
    <property type="entry name" value="Ribosomal_uS10_CS"/>
</dbReference>
<dbReference type="InterPro" id="IPR027486">
    <property type="entry name" value="Ribosomal_uS10_dom"/>
</dbReference>
<dbReference type="InterPro" id="IPR036838">
    <property type="entry name" value="Ribosomal_uS10_dom_sf"/>
</dbReference>
<dbReference type="NCBIfam" id="NF001861">
    <property type="entry name" value="PRK00596.1"/>
    <property type="match status" value="1"/>
</dbReference>
<dbReference type="NCBIfam" id="TIGR01049">
    <property type="entry name" value="rpsJ_bact"/>
    <property type="match status" value="1"/>
</dbReference>
<dbReference type="PANTHER" id="PTHR11700">
    <property type="entry name" value="30S RIBOSOMAL PROTEIN S10 FAMILY MEMBER"/>
    <property type="match status" value="1"/>
</dbReference>
<dbReference type="Pfam" id="PF00338">
    <property type="entry name" value="Ribosomal_S10"/>
    <property type="match status" value="1"/>
</dbReference>
<dbReference type="PRINTS" id="PR00971">
    <property type="entry name" value="RIBOSOMALS10"/>
</dbReference>
<dbReference type="SMART" id="SM01403">
    <property type="entry name" value="Ribosomal_S10"/>
    <property type="match status" value="1"/>
</dbReference>
<dbReference type="SUPFAM" id="SSF54999">
    <property type="entry name" value="Ribosomal protein S10"/>
    <property type="match status" value="1"/>
</dbReference>
<dbReference type="PROSITE" id="PS00361">
    <property type="entry name" value="RIBOSOMAL_S10"/>
    <property type="match status" value="1"/>
</dbReference>
<sequence length="103" mass="11712">MQNQRIRIRLKAFDHRLIDQSTAEIVDTAKRTGAQVHGPIPLPTRKEHFTILISPHVNKDARDQYVIRTHKRLVDIVKPTEKTVDALMRLELAAGVDVQISLG</sequence>